<dbReference type="EC" id="6.5.1.-" evidence="2"/>
<dbReference type="EMBL" id="AX059140">
    <property type="status" value="NOT_ANNOTATED_CDS"/>
    <property type="molecule type" value="Genomic_DNA"/>
</dbReference>
<dbReference type="GeneID" id="1260418"/>
<dbReference type="KEGG" id="vg:1260418"/>
<dbReference type="OrthoDB" id="8076at10239"/>
<dbReference type="GO" id="GO:0005524">
    <property type="term" value="F:ATP binding"/>
    <property type="evidence" value="ECO:0007669"/>
    <property type="project" value="UniProtKB-KW"/>
</dbReference>
<dbReference type="GO" id="GO:0016874">
    <property type="term" value="F:ligase activity"/>
    <property type="evidence" value="ECO:0007669"/>
    <property type="project" value="UniProtKB-KW"/>
</dbReference>
<dbReference type="GO" id="GO:0046872">
    <property type="term" value="F:metal ion binding"/>
    <property type="evidence" value="ECO:0007669"/>
    <property type="project" value="UniProtKB-KW"/>
</dbReference>
<dbReference type="GO" id="GO:0042245">
    <property type="term" value="P:RNA repair"/>
    <property type="evidence" value="ECO:0007669"/>
    <property type="project" value="UniProtKB-KW"/>
</dbReference>
<dbReference type="Gene3D" id="1.10.3550.20">
    <property type="match status" value="1"/>
</dbReference>
<dbReference type="InterPro" id="IPR019039">
    <property type="entry name" value="T4-Rnl1-like_N"/>
</dbReference>
<dbReference type="Pfam" id="PF09511">
    <property type="entry name" value="RNA_lig_T4_1"/>
    <property type="match status" value="1"/>
</dbReference>
<protein>
    <recommendedName>
        <fullName>RNA ligase</fullName>
        <ecNumber evidence="2">6.5.1.-</ecNumber>
    </recommendedName>
</protein>
<accession>P0DTD9</accession>
<organism>
    <name type="scientific">Rhodothermus phage RM378</name>
    <name type="common">Bacteriophage RM378</name>
    <dbReference type="NCBI Taxonomy" id="148943"/>
    <lineage>
        <taxon>Viruses</taxon>
        <taxon>Duplodnaviria</taxon>
        <taxon>Heunggongvirae</taxon>
        <taxon>Uroviricota</taxon>
        <taxon>Caudoviricetes</taxon>
    </lineage>
</organism>
<reference key="1">
    <citation type="journal article" date="2003" name="Nucleic Acids Res.">
        <title>Discovery and characterization of a thermostable bacteriophage RNA ligase homologous to T4 RNA ligase 1.</title>
        <authorList>
            <person name="Blondal T."/>
            <person name="Hjorleifsdottir S.H."/>
            <person name="Fridjonsson O.F."/>
            <person name="Aevarsson A."/>
            <person name="Skirnisdottir S."/>
            <person name="Hermannsdottir A.G."/>
            <person name="Hreggvidsson G.O."/>
            <person name="Smith A.V."/>
            <person name="Kristjansson J.K."/>
        </authorList>
    </citation>
    <scope>NUCLEOTIDE SEQUENCE [GENOMIC DNA]</scope>
    <scope>BIOPHYSICOCHEMICAL PROPERTIES</scope>
    <scope>COFACTOR</scope>
    <scope>CATALYTIC ACTIVITY</scope>
</reference>
<name>RLIG_BPRHR</name>
<comment type="function">
    <text evidence="1">Involved in countering a host defense mechanism which, following viral infection, activates the host induced anticodon nuclease and shuts off viral translation. Repairs 5'-PO4 and 3'-OH groups in the cleaved host tRNA.</text>
</comment>
<comment type="cofactor">
    <cofactor evidence="2">
        <name>Mg(2+)</name>
        <dbReference type="ChEBI" id="CHEBI:18420"/>
    </cofactor>
    <cofactor evidence="2">
        <name>Mn(2+)</name>
        <dbReference type="ChEBI" id="CHEBI:29035"/>
    </cofactor>
    <text evidence="2">Optimum activity is reached at 1 mM and 5 mM for Mn(2+) and Mg(2+) respectively, with Mn(2+) showing 90% of the Mg(2+) activity.</text>
</comment>
<comment type="biophysicochemical properties">
    <phDependence>
        <text>Optimum pH is 7.</text>
    </phDependence>
    <temperatureDependence>
        <text>Optimum temperature is 64 degrees Celsius.</text>
    </temperatureDependence>
</comment>
<sequence length="438" mass="51700">MESMNVKYPVEYLIEHLNSFESPEVAVESLRKEGIMCKNRGDLYMFKYHLGCKFDKIYHLACRGAILRKTDSGWKVLSYPFDKFFNWGEELQPEIVNYYQTLRYASPLNEKRKAGFMFKLPMKLVEKLDGTCVVLYYDEGWKIHTLGSIDANGSIVKNGMVTTHMDKTYRELFWETFEKKYPPYLLYHLNSSYCYIFEMVHPDARVVVPYEEPNIILIGVRSVDPEKGYFEVGPSEEAVRIFNESGGKINLKLPAVLSQEQNYTLFRANRLQELFEEVTPLFKSLRDGYEVVYEGFVAVQEIAPRVYYRTKIKHPVYLELHRIKTTITPEKLADLFLENKLDDFVLTPDEQETVMKLKEIYTDMRNQLESSFDTIYKEISEQVSPEENPGEFRKRFALRLMDYHDKSWFFARLDGDEEKMQKSEKKLLTERIEKGLFK</sequence>
<evidence type="ECO:0000250" key="1">
    <source>
        <dbReference type="UniProtKB" id="P00971"/>
    </source>
</evidence>
<evidence type="ECO:0000269" key="2">
    <source>
    </source>
</evidence>
<feature type="chain" id="PRO_0000450099" description="RNA ligase">
    <location>
        <begin position="1"/>
        <end position="438"/>
    </location>
</feature>
<feature type="active site" description="N6-AMP-lysine intermediate" evidence="1">
    <location>
        <position position="127"/>
    </location>
</feature>
<feature type="binding site" evidence="1">
    <location>
        <position position="48"/>
    </location>
    <ligand>
        <name>ATP</name>
        <dbReference type="ChEBI" id="CHEBI:30616"/>
    </ligand>
</feature>
<feature type="binding site" evidence="1">
    <location>
        <position position="63"/>
    </location>
    <ligand>
        <name>ATP</name>
        <dbReference type="ChEBI" id="CHEBI:30616"/>
    </ligand>
</feature>
<feature type="binding site" evidence="1">
    <location>
        <position position="83"/>
    </location>
    <ligand>
        <name>ATP</name>
        <dbReference type="ChEBI" id="CHEBI:30616"/>
    </ligand>
</feature>
<feature type="binding site" evidence="1">
    <location>
        <position position="198"/>
    </location>
    <ligand>
        <name>ATP</name>
        <dbReference type="ChEBI" id="CHEBI:30616"/>
    </ligand>
</feature>
<feature type="binding site" evidence="1">
    <location>
        <position position="311"/>
    </location>
    <ligand>
        <name>ATP</name>
        <dbReference type="ChEBI" id="CHEBI:30616"/>
    </ligand>
</feature>
<feature type="binding site" evidence="1">
    <location>
        <position position="313"/>
    </location>
    <ligand>
        <name>ATP</name>
        <dbReference type="ChEBI" id="CHEBI:30616"/>
    </ligand>
</feature>
<feature type="binding site" evidence="1">
    <location>
        <position position="342"/>
    </location>
    <ligand>
        <name>Mg(2+)</name>
        <dbReference type="ChEBI" id="CHEBI:18420"/>
        <note>catalytic</note>
    </ligand>
</feature>
<feature type="site" description="Essential for RNA ligase activity" evidence="1">
    <location>
        <position position="198"/>
    </location>
</feature>
<feature type="site" description="Essential for RNA ligase activity" evidence="1">
    <location>
        <position position="317"/>
    </location>
</feature>
<proteinExistence type="evidence at protein level"/>
<organismHost>
    <name type="scientific">Rhodothermus marinus</name>
    <name type="common">Rhodothermus obamensis</name>
    <dbReference type="NCBI Taxonomy" id="29549"/>
</organismHost>
<keyword id="KW-0067">ATP-binding</keyword>
<keyword id="KW-1259">Evasion of bacteria-mediated translation shutoff by virus</keyword>
<keyword id="KW-0945">Host-virus interaction</keyword>
<keyword id="KW-0436">Ligase</keyword>
<keyword id="KW-0460">Magnesium</keyword>
<keyword id="KW-0464">Manganese</keyword>
<keyword id="KW-0479">Metal-binding</keyword>
<keyword id="KW-0547">Nucleotide-binding</keyword>
<keyword id="KW-0692">RNA repair</keyword>